<reference key="1">
    <citation type="journal article" date="2012" name="BMC Genomics">
        <title>Tools to kill: Genome of one of the most destructive plant pathogenic fungi Macrophomina phaseolina.</title>
        <authorList>
            <person name="Islam M.S."/>
            <person name="Haque M.S."/>
            <person name="Islam M.M."/>
            <person name="Emdad E.M."/>
            <person name="Halim A."/>
            <person name="Hossen Q.M.M."/>
            <person name="Hossain M.Z."/>
            <person name="Ahmed B."/>
            <person name="Rahim S."/>
            <person name="Rahman M.S."/>
            <person name="Alam M.M."/>
            <person name="Hou S."/>
            <person name="Wan X."/>
            <person name="Saito J.A."/>
            <person name="Alam M."/>
        </authorList>
    </citation>
    <scope>NUCLEOTIDE SEQUENCE [LARGE SCALE GENOMIC DNA]</scope>
    <source>
        <strain>MS6</strain>
    </source>
</reference>
<reference key="2">
    <citation type="journal article" date="2022" name="Nature">
        <title>Discovery of non-squalene triterpenes.</title>
        <authorList>
            <person name="Tao H."/>
            <person name="Lauterbach L."/>
            <person name="Bian G."/>
            <person name="Chen R."/>
            <person name="Hou A."/>
            <person name="Mori T."/>
            <person name="Cheng S."/>
            <person name="Hu B."/>
            <person name="Lu L."/>
            <person name="Mu X."/>
            <person name="Li M."/>
            <person name="Adachi N."/>
            <person name="Kawasaki M."/>
            <person name="Moriya T."/>
            <person name="Senda T."/>
            <person name="Wang X."/>
            <person name="Deng Z."/>
            <person name="Abe I."/>
            <person name="Dickschat J.S."/>
            <person name="Liu T."/>
        </authorList>
    </citation>
    <scope>STRUCTURE BY ELECTRON MICROSCOPY (3.17 ANGSTROMS)</scope>
    <scope>FUNCTION</scope>
    <scope>CATALYTIC ACTIVITY</scope>
    <scope>DOMAIN</scope>
</reference>
<name>MPMS_MACPH</name>
<sequence length="698" mass="78177">MCNTKCYNTLAKMTVITEPAMEYMYSVPLDESEYDKCGFCQDPRYRPRRHKDQHLARAGSAKAKELCEALIGVYPRPTCESAVGHSIALVMPECMPGRVEAMGEFMESIFYMDNIAESGSQQDTGNLGTEWANDMETGPTTSVNSNTGAKQVMAKLALQLLSIDPVCAGNVMKAWKEWAAGFAKPRRFDSIEQYIDYRLVDSGAIVAVHLMNFGMGLDISVEELREVSDIVNHAGKALSYQNDFFSFNYEHDMFVKLPDSIGIANAVFVLAETEGLSLAEAKERVKELAKEHEDAVLRLKDEVESKVSYKLRICLEGLVDMVVGNLVWSASCDRYSSYRREKHQMELPIRIQGPPTPPQEPVYEKATLPNGKQLDAPTESSGKDLSDGVATLSGDEPVLGDEIVSAPIKYLESLPSKGFREAIIDGMNGWLNLPARSVSIIKDVVKHIHTASLLCDDIEDSSPLRRGQPSAHIIFGVSQTVNSTSYLWTLAIDRLSELSSPKSLRIFIDEVRKMQIGQSFDLHWTAALQCPSEEEYLSMIDMKTGGLFHLLIRLMIAESPRKVDMDFSGLVSMTGRYFQIRDDLSNLTSEEYENQKGYCEDLDEGKYSLPLIHALKHTKNKVQLESLLIQRKTQGGMTLEMKRLAIQIMKEAGSLEHTRKVVLELQDAVHRELAKLEEAFGQENYVIQLALERLRIKA</sequence>
<accession>K2SUY0</accession>
<dbReference type="EC" id="4.2.3.221" evidence="6"/>
<dbReference type="EC" id="2.5.1.158" evidence="6"/>
<dbReference type="EMBL" id="AHHD01000085">
    <property type="protein sequence ID" value="EKG20455.1"/>
    <property type="molecule type" value="Genomic_DNA"/>
</dbReference>
<dbReference type="PDB" id="7WIJ">
    <property type="method" value="EM"/>
    <property type="resolution" value="3.17 A"/>
    <property type="chains" value="A/B/C/D/E/F=1-698"/>
</dbReference>
<dbReference type="PDBsum" id="7WIJ"/>
<dbReference type="EMDB" id="EMD-32531"/>
<dbReference type="SMR" id="K2SUY0"/>
<dbReference type="STRING" id="1126212.K2SUY0"/>
<dbReference type="KEGG" id="ag:EKG20455"/>
<dbReference type="VEuPathDB" id="FungiDB:MPH_02178"/>
<dbReference type="eggNOG" id="KOG0777">
    <property type="taxonomic scope" value="Eukaryota"/>
</dbReference>
<dbReference type="HOGENOM" id="CLU_014015_10_0_1"/>
<dbReference type="InParanoid" id="K2SUY0"/>
<dbReference type="OrthoDB" id="6921389at2759"/>
<dbReference type="Proteomes" id="UP000007129">
    <property type="component" value="Unassembled WGS sequence"/>
</dbReference>
<dbReference type="GO" id="GO:0016829">
    <property type="term" value="F:lyase activity"/>
    <property type="evidence" value="ECO:0007669"/>
    <property type="project" value="UniProtKB-KW"/>
</dbReference>
<dbReference type="GO" id="GO:0046872">
    <property type="term" value="F:metal ion binding"/>
    <property type="evidence" value="ECO:0007669"/>
    <property type="project" value="UniProtKB-KW"/>
</dbReference>
<dbReference type="GO" id="GO:0004659">
    <property type="term" value="F:prenyltransferase activity"/>
    <property type="evidence" value="ECO:0007669"/>
    <property type="project" value="InterPro"/>
</dbReference>
<dbReference type="GO" id="GO:0046165">
    <property type="term" value="P:alcohol biosynthetic process"/>
    <property type="evidence" value="ECO:0007669"/>
    <property type="project" value="UniProtKB-ARBA"/>
</dbReference>
<dbReference type="GO" id="GO:0008299">
    <property type="term" value="P:isoprenoid biosynthetic process"/>
    <property type="evidence" value="ECO:0007669"/>
    <property type="project" value="UniProtKB-KW"/>
</dbReference>
<dbReference type="GO" id="GO:0043386">
    <property type="term" value="P:mycotoxin biosynthetic process"/>
    <property type="evidence" value="ECO:0007669"/>
    <property type="project" value="UniProtKB-ARBA"/>
</dbReference>
<dbReference type="Gene3D" id="1.10.600.10">
    <property type="entry name" value="Farnesyl Diphosphate Synthase"/>
    <property type="match status" value="2"/>
</dbReference>
<dbReference type="InterPro" id="IPR008949">
    <property type="entry name" value="Isoprenoid_synthase_dom_sf"/>
</dbReference>
<dbReference type="InterPro" id="IPR000092">
    <property type="entry name" value="Polyprenyl_synt"/>
</dbReference>
<dbReference type="InterPro" id="IPR033749">
    <property type="entry name" value="Polyprenyl_synt_CS"/>
</dbReference>
<dbReference type="PANTHER" id="PTHR12001">
    <property type="entry name" value="GERANYLGERANYL PYROPHOSPHATE SYNTHASE"/>
    <property type="match status" value="1"/>
</dbReference>
<dbReference type="PANTHER" id="PTHR12001:SF72">
    <property type="entry name" value="THIJ_PFPI FAMILY PROTEIN (AFU_ORTHOLOGUE AFUA_3G01210)-RELATED"/>
    <property type="match status" value="1"/>
</dbReference>
<dbReference type="Pfam" id="PF00348">
    <property type="entry name" value="polyprenyl_synt"/>
    <property type="match status" value="1"/>
</dbReference>
<dbReference type="Pfam" id="PF19086">
    <property type="entry name" value="Terpene_syn_C_2"/>
    <property type="match status" value="1"/>
</dbReference>
<dbReference type="SFLD" id="SFLDS00005">
    <property type="entry name" value="Isoprenoid_Synthase_Type_I"/>
    <property type="match status" value="1"/>
</dbReference>
<dbReference type="SUPFAM" id="SSF48576">
    <property type="entry name" value="Terpenoid synthases"/>
    <property type="match status" value="2"/>
</dbReference>
<dbReference type="PROSITE" id="PS00723">
    <property type="entry name" value="POLYPRENYL_SYNTHASE_1"/>
    <property type="match status" value="1"/>
</dbReference>
<gene>
    <name type="ORF">MPH_02178</name>
</gene>
<keyword id="KW-0002">3D-structure</keyword>
<keyword id="KW-0414">Isoprene biosynthesis</keyword>
<keyword id="KW-0456">Lyase</keyword>
<keyword id="KW-0460">Magnesium</keyword>
<keyword id="KW-0479">Metal-binding</keyword>
<keyword id="KW-0511">Multifunctional enzyme</keyword>
<keyword id="KW-1185">Reference proteome</keyword>
<keyword id="KW-0677">Repeat</keyword>
<keyword id="KW-0808">Transferase</keyword>
<organism>
    <name type="scientific">Macrophomina phaseolina (strain MS6)</name>
    <name type="common">Charcoal rot fungus</name>
    <dbReference type="NCBI Taxonomy" id="1126212"/>
    <lineage>
        <taxon>Eukaryota</taxon>
        <taxon>Fungi</taxon>
        <taxon>Dikarya</taxon>
        <taxon>Ascomycota</taxon>
        <taxon>Pezizomycotina</taxon>
        <taxon>Dothideomycetes</taxon>
        <taxon>Dothideomycetes incertae sedis</taxon>
        <taxon>Botryosphaeriales</taxon>
        <taxon>Botryosphaeriaceae</taxon>
        <taxon>Macrophomina</taxon>
    </lineage>
</organism>
<protein>
    <recommendedName>
        <fullName evidence="7">Macrophomene synthase</fullName>
        <shortName evidence="7">MpMS</shortName>
    </recommendedName>
    <domain>
        <recommendedName>
            <fullName evidence="7">Terpene cyclase</fullName>
            <ecNumber evidence="6">4.2.3.221</ecNumber>
        </recommendedName>
    </domain>
    <domain>
        <recommendedName>
            <fullName evidence="7">Hexaprenyl-diphosphate synthase</fullName>
            <shortName evidence="7">HexPP synthase</shortName>
            <ecNumber evidence="6">2.5.1.158</ecNumber>
        </recommendedName>
    </domain>
</protein>
<evidence type="ECO:0000250" key="1">
    <source>
        <dbReference type="UniProtKB" id="A0A0P0ZD79"/>
    </source>
</evidence>
<evidence type="ECO:0000250" key="2">
    <source>
        <dbReference type="UniProtKB" id="P9WEV7"/>
    </source>
</evidence>
<evidence type="ECO:0000250" key="3">
    <source>
        <dbReference type="UniProtKB" id="Q12051"/>
    </source>
</evidence>
<evidence type="ECO:0000250" key="4">
    <source>
        <dbReference type="UniProtKB" id="Q40577"/>
    </source>
</evidence>
<evidence type="ECO:0000256" key="5">
    <source>
        <dbReference type="SAM" id="MobiDB-lite"/>
    </source>
</evidence>
<evidence type="ECO:0000269" key="6">
    <source>
    </source>
</evidence>
<evidence type="ECO:0000303" key="7">
    <source>
    </source>
</evidence>
<evidence type="ECO:0000305" key="8"/>
<evidence type="ECO:0000305" key="9">
    <source>
    </source>
</evidence>
<evidence type="ECO:0007829" key="10">
    <source>
        <dbReference type="PDB" id="7WIJ"/>
    </source>
</evidence>
<comment type="function">
    <text evidence="6">Bifunctional terpene synthase that converts dimethylallyl diphosphate (DMAPP) and isopentenyl diphosphate (IPP) into macrophomene as a single product (PubMed:35650436). The C-terminal prenyltransferase (PT) domain of MpMS catalyzes formation of hexaprenyl diphosphate (HexPP), whereas the N-terminal terpene cyclase (TC) domain catalyzes the cyclization of HexPP to macrophomene (PubMed:35650436).</text>
</comment>
<comment type="catalytic activity">
    <reaction evidence="6">
        <text>5 isopentenyl diphosphate + dimethylallyl diphosphate = all-trans-hexaprenyl diphosphate + 5 diphosphate</text>
        <dbReference type="Rhea" id="RHEA:77975"/>
        <dbReference type="ChEBI" id="CHEBI:33019"/>
        <dbReference type="ChEBI" id="CHEBI:57623"/>
        <dbReference type="ChEBI" id="CHEBI:58179"/>
        <dbReference type="ChEBI" id="CHEBI:128769"/>
        <dbReference type="EC" id="2.5.1.158"/>
    </reaction>
    <physiologicalReaction direction="left-to-right" evidence="6">
        <dbReference type="Rhea" id="RHEA:77976"/>
    </physiologicalReaction>
</comment>
<comment type="catalytic activity">
    <reaction evidence="6">
        <text>all-trans-hexaprenyl diphosphate = macrophomene + diphosphate</text>
        <dbReference type="Rhea" id="RHEA:77967"/>
        <dbReference type="ChEBI" id="CHEBI:33019"/>
        <dbReference type="ChEBI" id="CHEBI:58179"/>
        <dbReference type="ChEBI" id="CHEBI:192980"/>
        <dbReference type="EC" id="4.2.3.221"/>
    </reaction>
    <physiologicalReaction direction="left-to-right" evidence="6">
        <dbReference type="Rhea" id="RHEA:77968"/>
    </physiologicalReaction>
</comment>
<comment type="cofactor">
    <cofactor evidence="2">
        <name>Mg(2+)</name>
        <dbReference type="ChEBI" id="CHEBI:18420"/>
    </cofactor>
</comment>
<comment type="subunit">
    <text evidence="6">Hexamer.</text>
</comment>
<comment type="domain">
    <text evidence="9">The conserved DDXXD motifs as well as the NSE/DTE motif are important for the catalytic activity, presumably through binding to Mg(2+).</text>
</comment>
<comment type="similarity">
    <text evidence="8">In the N-terminal section; belongs to the terpene synthase family.</text>
</comment>
<comment type="similarity">
    <text evidence="8">In the C-terminal section; belongs to the FPP/GGPP synthase family.</text>
</comment>
<feature type="chain" id="PRO_0000457803" description="Macrophomene synthase">
    <location>
        <begin position="1"/>
        <end position="698"/>
    </location>
</feature>
<feature type="region of interest" description="Terpene cyclase" evidence="1">
    <location>
        <begin position="21"/>
        <end position="340"/>
    </location>
</feature>
<feature type="region of interest" description="Prenyltransferase" evidence="1">
    <location>
        <begin position="341"/>
        <end position="696"/>
    </location>
</feature>
<feature type="region of interest" description="Disordered" evidence="5">
    <location>
        <begin position="368"/>
        <end position="387"/>
    </location>
</feature>
<feature type="short sequence motif" description="DDXXD 1" evidence="1">
    <location>
        <begin position="113"/>
        <end position="117"/>
    </location>
</feature>
<feature type="short sequence motif" description="NSE/DTE" evidence="1">
    <location>
        <begin position="242"/>
        <end position="250"/>
    </location>
</feature>
<feature type="short sequence motif" description="DDXXD 2" evidence="1">
    <location>
        <begin position="456"/>
        <end position="460"/>
    </location>
</feature>
<feature type="binding site" evidence="4">
    <location>
        <position position="113"/>
    </location>
    <ligand>
        <name>Mg(2+)</name>
        <dbReference type="ChEBI" id="CHEBI:18420"/>
        <label>1</label>
    </ligand>
</feature>
<feature type="binding site" evidence="4">
    <location>
        <position position="113"/>
    </location>
    <ligand>
        <name>Mg(2+)</name>
        <dbReference type="ChEBI" id="CHEBI:18420"/>
        <label>2</label>
    </ligand>
</feature>
<feature type="binding site" evidence="3">
    <location>
        <position position="417"/>
    </location>
    <ligand>
        <name>isopentenyl diphosphate</name>
        <dbReference type="ChEBI" id="CHEBI:128769"/>
    </ligand>
</feature>
<feature type="binding site" evidence="3">
    <location>
        <position position="420"/>
    </location>
    <ligand>
        <name>isopentenyl diphosphate</name>
        <dbReference type="ChEBI" id="CHEBI:128769"/>
    </ligand>
</feature>
<feature type="binding site" evidence="3">
    <location>
        <position position="449"/>
    </location>
    <ligand>
        <name>isopentenyl diphosphate</name>
        <dbReference type="ChEBI" id="CHEBI:128769"/>
    </ligand>
</feature>
<feature type="binding site" evidence="3">
    <location>
        <position position="456"/>
    </location>
    <ligand>
        <name>Mg(2+)</name>
        <dbReference type="ChEBI" id="CHEBI:18420"/>
        <label>3</label>
    </ligand>
</feature>
<feature type="binding site" evidence="3">
    <location>
        <position position="456"/>
    </location>
    <ligand>
        <name>Mg(2+)</name>
        <dbReference type="ChEBI" id="CHEBI:18420"/>
        <label>4</label>
    </ligand>
</feature>
<feature type="binding site" evidence="3">
    <location>
        <position position="460"/>
    </location>
    <ligand>
        <name>Mg(2+)</name>
        <dbReference type="ChEBI" id="CHEBI:18420"/>
        <label>3</label>
    </ligand>
</feature>
<feature type="binding site" evidence="3">
    <location>
        <position position="460"/>
    </location>
    <ligand>
        <name>Mg(2+)</name>
        <dbReference type="ChEBI" id="CHEBI:18420"/>
        <label>4</label>
    </ligand>
</feature>
<feature type="binding site" evidence="3">
    <location>
        <position position="465"/>
    </location>
    <ligand>
        <name>dimethylallyl diphosphate</name>
        <dbReference type="ChEBI" id="CHEBI:57623"/>
    </ligand>
</feature>
<feature type="binding site" evidence="3">
    <location>
        <position position="466"/>
    </location>
    <ligand>
        <name>isopentenyl diphosphate</name>
        <dbReference type="ChEBI" id="CHEBI:128769"/>
    </ligand>
</feature>
<feature type="binding site" evidence="3">
    <location>
        <position position="543"/>
    </location>
    <ligand>
        <name>dimethylallyl diphosphate</name>
        <dbReference type="ChEBI" id="CHEBI:57623"/>
    </ligand>
</feature>
<feature type="binding site" evidence="3">
    <location>
        <position position="544"/>
    </location>
    <ligand>
        <name>dimethylallyl diphosphate</name>
        <dbReference type="ChEBI" id="CHEBI:57623"/>
    </ligand>
</feature>
<feature type="binding site" evidence="3">
    <location>
        <position position="579"/>
    </location>
    <ligand>
        <name>dimethylallyl diphosphate</name>
        <dbReference type="ChEBI" id="CHEBI:57623"/>
    </ligand>
</feature>
<feature type="binding site" evidence="3">
    <location>
        <position position="586"/>
    </location>
    <ligand>
        <name>dimethylallyl diphosphate</name>
        <dbReference type="ChEBI" id="CHEBI:57623"/>
    </ligand>
</feature>
<feature type="binding site" evidence="3">
    <location>
        <position position="596"/>
    </location>
    <ligand>
        <name>dimethylallyl diphosphate</name>
        <dbReference type="ChEBI" id="CHEBI:57623"/>
    </ligand>
</feature>
<feature type="binding site" evidence="3">
    <location>
        <position position="606"/>
    </location>
    <ligand>
        <name>dimethylallyl diphosphate</name>
        <dbReference type="ChEBI" id="CHEBI:57623"/>
    </ligand>
</feature>
<feature type="helix" evidence="10">
    <location>
        <begin position="406"/>
        <end position="411"/>
    </location>
</feature>
<feature type="helix" evidence="10">
    <location>
        <begin position="419"/>
        <end position="427"/>
    </location>
</feature>
<feature type="turn" evidence="10">
    <location>
        <begin position="428"/>
        <end position="430"/>
    </location>
</feature>
<feature type="helix" evidence="10">
    <location>
        <begin position="435"/>
        <end position="453"/>
    </location>
</feature>
<feature type="helix" evidence="10">
    <location>
        <begin position="471"/>
        <end position="475"/>
    </location>
</feature>
<feature type="helix" evidence="10">
    <location>
        <begin position="478"/>
        <end position="495"/>
    </location>
</feature>
<feature type="helix" evidence="10">
    <location>
        <begin position="503"/>
        <end position="527"/>
    </location>
</feature>
<feature type="helix" evidence="10">
    <location>
        <begin position="533"/>
        <end position="557"/>
    </location>
</feature>
<feature type="helix" evidence="10">
    <location>
        <begin position="568"/>
        <end position="587"/>
    </location>
</feature>
<feature type="helix" evidence="10">
    <location>
        <begin position="609"/>
        <end position="616"/>
    </location>
</feature>
<feature type="helix" evidence="10">
    <location>
        <begin position="621"/>
        <end position="634"/>
    </location>
</feature>
<feature type="helix" evidence="10">
    <location>
        <begin position="639"/>
        <end position="651"/>
    </location>
</feature>
<feature type="helix" evidence="10">
    <location>
        <begin position="654"/>
        <end position="677"/>
    </location>
</feature>
<feature type="turn" evidence="10">
    <location>
        <begin position="678"/>
        <end position="681"/>
    </location>
</feature>
<feature type="helix" evidence="10">
    <location>
        <begin position="687"/>
        <end position="693"/>
    </location>
</feature>
<proteinExistence type="evidence at protein level"/>